<name>PYRH_BURM9</name>
<feature type="chain" id="PRO_0000323809" description="Uridylate kinase">
    <location>
        <begin position="1"/>
        <end position="237"/>
    </location>
</feature>
<feature type="binding site" evidence="1">
    <location>
        <begin position="11"/>
        <end position="14"/>
    </location>
    <ligand>
        <name>ATP</name>
        <dbReference type="ChEBI" id="CHEBI:30616"/>
    </ligand>
</feature>
<feature type="binding site" evidence="1">
    <location>
        <position position="53"/>
    </location>
    <ligand>
        <name>UMP</name>
        <dbReference type="ChEBI" id="CHEBI:57865"/>
    </ligand>
</feature>
<feature type="binding site" evidence="1">
    <location>
        <position position="54"/>
    </location>
    <ligand>
        <name>ATP</name>
        <dbReference type="ChEBI" id="CHEBI:30616"/>
    </ligand>
</feature>
<feature type="binding site" evidence="1">
    <location>
        <position position="58"/>
    </location>
    <ligand>
        <name>ATP</name>
        <dbReference type="ChEBI" id="CHEBI:30616"/>
    </ligand>
</feature>
<feature type="binding site" evidence="1">
    <location>
        <position position="73"/>
    </location>
    <ligand>
        <name>UMP</name>
        <dbReference type="ChEBI" id="CHEBI:57865"/>
    </ligand>
</feature>
<feature type="binding site" evidence="1">
    <location>
        <begin position="134"/>
        <end position="141"/>
    </location>
    <ligand>
        <name>UMP</name>
        <dbReference type="ChEBI" id="CHEBI:57865"/>
    </ligand>
</feature>
<feature type="binding site" evidence="1">
    <location>
        <position position="161"/>
    </location>
    <ligand>
        <name>ATP</name>
        <dbReference type="ChEBI" id="CHEBI:30616"/>
    </ligand>
</feature>
<feature type="binding site" evidence="1">
    <location>
        <position position="167"/>
    </location>
    <ligand>
        <name>ATP</name>
        <dbReference type="ChEBI" id="CHEBI:30616"/>
    </ligand>
</feature>
<feature type="binding site" evidence="1">
    <location>
        <position position="170"/>
    </location>
    <ligand>
        <name>ATP</name>
        <dbReference type="ChEBI" id="CHEBI:30616"/>
    </ligand>
</feature>
<gene>
    <name evidence="1" type="primary">pyrH</name>
    <name type="ordered locus">BMA10229_A3257</name>
</gene>
<reference key="1">
    <citation type="journal article" date="2010" name="Genome Biol. Evol.">
        <title>Continuing evolution of Burkholderia mallei through genome reduction and large-scale rearrangements.</title>
        <authorList>
            <person name="Losada L."/>
            <person name="Ronning C.M."/>
            <person name="DeShazer D."/>
            <person name="Woods D."/>
            <person name="Fedorova N."/>
            <person name="Kim H.S."/>
            <person name="Shabalina S.A."/>
            <person name="Pearson T.R."/>
            <person name="Brinkac L."/>
            <person name="Tan P."/>
            <person name="Nandi T."/>
            <person name="Crabtree J."/>
            <person name="Badger J."/>
            <person name="Beckstrom-Sternberg S."/>
            <person name="Saqib M."/>
            <person name="Schutzer S.E."/>
            <person name="Keim P."/>
            <person name="Nierman W.C."/>
        </authorList>
    </citation>
    <scope>NUCLEOTIDE SEQUENCE [LARGE SCALE GENOMIC DNA]</scope>
    <source>
        <strain>NCTC 10229</strain>
    </source>
</reference>
<sequence>MPNAYKRVLLKLSGEALMGDDAFGINRATIERMVADIAEVVRLGTQLAVVIGGGNIFRGVAGGAAGMDRATADYMGMLATMMNALALQDAMRHAGIEARVQSALRMDQVVEPYIRPRAIRQLEEGKVVIFAAGTGNPFFTTDTAAALRGSEVGAEVVLKATKVDGVYSADPKKDPSATRYSSISFDEAIGRNLQVMDATAFALCRDQKLPIRVFSINKPGALKRIVQGEDEGTLVHV</sequence>
<organism>
    <name type="scientific">Burkholderia mallei (strain NCTC 10229)</name>
    <dbReference type="NCBI Taxonomy" id="412022"/>
    <lineage>
        <taxon>Bacteria</taxon>
        <taxon>Pseudomonadati</taxon>
        <taxon>Pseudomonadota</taxon>
        <taxon>Betaproteobacteria</taxon>
        <taxon>Burkholderiales</taxon>
        <taxon>Burkholderiaceae</taxon>
        <taxon>Burkholderia</taxon>
        <taxon>pseudomallei group</taxon>
    </lineage>
</organism>
<dbReference type="EC" id="2.7.4.22" evidence="1"/>
<dbReference type="EMBL" id="CP000546">
    <property type="protein sequence ID" value="ABN03099.1"/>
    <property type="molecule type" value="Genomic_DNA"/>
</dbReference>
<dbReference type="RefSeq" id="WP_004193606.1">
    <property type="nucleotide sequence ID" value="NC_008836.1"/>
</dbReference>
<dbReference type="SMR" id="A2SB74"/>
<dbReference type="GeneID" id="93060698"/>
<dbReference type="KEGG" id="bml:BMA10229_A3257"/>
<dbReference type="HOGENOM" id="CLU_033861_0_0_4"/>
<dbReference type="UniPathway" id="UPA00159">
    <property type="reaction ID" value="UER00275"/>
</dbReference>
<dbReference type="Proteomes" id="UP000002283">
    <property type="component" value="Chromosome I"/>
</dbReference>
<dbReference type="GO" id="GO:0005829">
    <property type="term" value="C:cytosol"/>
    <property type="evidence" value="ECO:0007669"/>
    <property type="project" value="TreeGrafter"/>
</dbReference>
<dbReference type="GO" id="GO:0005524">
    <property type="term" value="F:ATP binding"/>
    <property type="evidence" value="ECO:0007669"/>
    <property type="project" value="UniProtKB-KW"/>
</dbReference>
<dbReference type="GO" id="GO:0033862">
    <property type="term" value="F:UMP kinase activity"/>
    <property type="evidence" value="ECO:0007669"/>
    <property type="project" value="UniProtKB-EC"/>
</dbReference>
<dbReference type="GO" id="GO:0044210">
    <property type="term" value="P:'de novo' CTP biosynthetic process"/>
    <property type="evidence" value="ECO:0007669"/>
    <property type="project" value="UniProtKB-UniRule"/>
</dbReference>
<dbReference type="GO" id="GO:0006225">
    <property type="term" value="P:UDP biosynthetic process"/>
    <property type="evidence" value="ECO:0007669"/>
    <property type="project" value="TreeGrafter"/>
</dbReference>
<dbReference type="CDD" id="cd04254">
    <property type="entry name" value="AAK_UMPK-PyrH-Ec"/>
    <property type="match status" value="1"/>
</dbReference>
<dbReference type="FunFam" id="3.40.1160.10:FF:000001">
    <property type="entry name" value="Uridylate kinase"/>
    <property type="match status" value="1"/>
</dbReference>
<dbReference type="Gene3D" id="3.40.1160.10">
    <property type="entry name" value="Acetylglutamate kinase-like"/>
    <property type="match status" value="1"/>
</dbReference>
<dbReference type="HAMAP" id="MF_01220_B">
    <property type="entry name" value="PyrH_B"/>
    <property type="match status" value="1"/>
</dbReference>
<dbReference type="InterPro" id="IPR036393">
    <property type="entry name" value="AceGlu_kinase-like_sf"/>
</dbReference>
<dbReference type="InterPro" id="IPR001048">
    <property type="entry name" value="Asp/Glu/Uridylate_kinase"/>
</dbReference>
<dbReference type="InterPro" id="IPR011817">
    <property type="entry name" value="Uridylate_kinase"/>
</dbReference>
<dbReference type="InterPro" id="IPR015963">
    <property type="entry name" value="Uridylate_kinase_bac"/>
</dbReference>
<dbReference type="NCBIfam" id="TIGR02075">
    <property type="entry name" value="pyrH_bact"/>
    <property type="match status" value="1"/>
</dbReference>
<dbReference type="PANTHER" id="PTHR42833">
    <property type="entry name" value="URIDYLATE KINASE"/>
    <property type="match status" value="1"/>
</dbReference>
<dbReference type="PANTHER" id="PTHR42833:SF4">
    <property type="entry name" value="URIDYLATE KINASE PUMPKIN, CHLOROPLASTIC"/>
    <property type="match status" value="1"/>
</dbReference>
<dbReference type="Pfam" id="PF00696">
    <property type="entry name" value="AA_kinase"/>
    <property type="match status" value="1"/>
</dbReference>
<dbReference type="PIRSF" id="PIRSF005650">
    <property type="entry name" value="Uridylate_kin"/>
    <property type="match status" value="1"/>
</dbReference>
<dbReference type="SUPFAM" id="SSF53633">
    <property type="entry name" value="Carbamate kinase-like"/>
    <property type="match status" value="1"/>
</dbReference>
<comment type="function">
    <text evidence="1">Catalyzes the reversible phosphorylation of UMP to UDP.</text>
</comment>
<comment type="catalytic activity">
    <reaction evidence="1">
        <text>UMP + ATP = UDP + ADP</text>
        <dbReference type="Rhea" id="RHEA:24400"/>
        <dbReference type="ChEBI" id="CHEBI:30616"/>
        <dbReference type="ChEBI" id="CHEBI:57865"/>
        <dbReference type="ChEBI" id="CHEBI:58223"/>
        <dbReference type="ChEBI" id="CHEBI:456216"/>
        <dbReference type="EC" id="2.7.4.22"/>
    </reaction>
</comment>
<comment type="activity regulation">
    <text evidence="1">Inhibited by UTP.</text>
</comment>
<comment type="pathway">
    <text evidence="1">Pyrimidine metabolism; CTP biosynthesis via de novo pathway; UDP from UMP (UMPK route): step 1/1.</text>
</comment>
<comment type="subunit">
    <text evidence="1">Homohexamer.</text>
</comment>
<comment type="subcellular location">
    <subcellularLocation>
        <location evidence="1">Cytoplasm</location>
    </subcellularLocation>
</comment>
<comment type="similarity">
    <text evidence="1">Belongs to the UMP kinase family.</text>
</comment>
<keyword id="KW-0067">ATP-binding</keyword>
<keyword id="KW-0963">Cytoplasm</keyword>
<keyword id="KW-0418">Kinase</keyword>
<keyword id="KW-0547">Nucleotide-binding</keyword>
<keyword id="KW-0665">Pyrimidine biosynthesis</keyword>
<keyword id="KW-0808">Transferase</keyword>
<evidence type="ECO:0000255" key="1">
    <source>
        <dbReference type="HAMAP-Rule" id="MF_01220"/>
    </source>
</evidence>
<accession>A2SB74</accession>
<proteinExistence type="inferred from homology"/>
<protein>
    <recommendedName>
        <fullName evidence="1">Uridylate kinase</fullName>
        <shortName evidence="1">UK</shortName>
        <ecNumber evidence="1">2.7.4.22</ecNumber>
    </recommendedName>
    <alternativeName>
        <fullName evidence="1">Uridine monophosphate kinase</fullName>
        <shortName evidence="1">UMP kinase</shortName>
        <shortName evidence="1">UMPK</shortName>
    </alternativeName>
</protein>